<accession>C4ZYU1</accession>
<organism>
    <name type="scientific">Escherichia coli (strain K12 / MC4100 / BW2952)</name>
    <dbReference type="NCBI Taxonomy" id="595496"/>
    <lineage>
        <taxon>Bacteria</taxon>
        <taxon>Pseudomonadati</taxon>
        <taxon>Pseudomonadota</taxon>
        <taxon>Gammaproteobacteria</taxon>
        <taxon>Enterobacterales</taxon>
        <taxon>Enterobacteriaceae</taxon>
        <taxon>Escherichia</taxon>
    </lineage>
</organism>
<sequence length="61" mass="6856">MLILTRRVGETLMIGDEVTVTVLGVKGNQVRIGVNAPKEVSVHREEIYQRIQAEKSQQSSY</sequence>
<comment type="function">
    <text evidence="1">A key translational regulator that binds mRNA to regulate translation initiation and/or mRNA stability. Mediates global changes in gene expression, shifting from rapid growth to stress survival by linking envelope stress, the stringent response and the catabolite repression systems. Usually binds in the 5'-UTR; binding at or near the Shine-Dalgarno sequence prevents ribosome-binding, repressing translation, binding elsewhere in the 5'-UTR can activate translation and/or stabilize the mRNA. Its function is antagonized by small RNA(s).</text>
</comment>
<comment type="subunit">
    <text evidence="1">Homodimer; the beta-strands of each monomer intercalate to form a hydrophobic core, while the alpha-helices form wings that extend away from the core.</text>
</comment>
<comment type="subcellular location">
    <subcellularLocation>
        <location evidence="1">Cytoplasm</location>
    </subcellularLocation>
</comment>
<comment type="similarity">
    <text evidence="1">Belongs to the CsrA/RsmA family.</text>
</comment>
<protein>
    <recommendedName>
        <fullName evidence="1">Translational regulator CsrA</fullName>
    </recommendedName>
    <alternativeName>
        <fullName evidence="1">Carbon storage regulator</fullName>
    </alternativeName>
</protein>
<name>CSRA_ECOBW</name>
<feature type="chain" id="PRO_1000203640" description="Translational regulator CsrA">
    <location>
        <begin position="1"/>
        <end position="61"/>
    </location>
</feature>
<evidence type="ECO:0000255" key="1">
    <source>
        <dbReference type="HAMAP-Rule" id="MF_00167"/>
    </source>
</evidence>
<proteinExistence type="inferred from homology"/>
<reference key="1">
    <citation type="journal article" date="2009" name="J. Bacteriol.">
        <title>Genomic sequencing reveals regulatory mutations and recombinational events in the widely used MC4100 lineage of Escherichia coli K-12.</title>
        <authorList>
            <person name="Ferenci T."/>
            <person name="Zhou Z."/>
            <person name="Betteridge T."/>
            <person name="Ren Y."/>
            <person name="Liu Y."/>
            <person name="Feng L."/>
            <person name="Reeves P.R."/>
            <person name="Wang L."/>
        </authorList>
    </citation>
    <scope>NUCLEOTIDE SEQUENCE [LARGE SCALE GENOMIC DNA]</scope>
    <source>
        <strain>K12 / MC4100 / BW2952</strain>
    </source>
</reference>
<keyword id="KW-0010">Activator</keyword>
<keyword id="KW-0963">Cytoplasm</keyword>
<keyword id="KW-0678">Repressor</keyword>
<keyword id="KW-0694">RNA-binding</keyword>
<keyword id="KW-0810">Translation regulation</keyword>
<gene>
    <name evidence="1" type="primary">csrA</name>
    <name type="ordered locus">BWG_2432</name>
</gene>
<dbReference type="EMBL" id="CP001396">
    <property type="protein sequence ID" value="ACR64069.1"/>
    <property type="molecule type" value="Genomic_DNA"/>
</dbReference>
<dbReference type="RefSeq" id="WP_000906486.1">
    <property type="nucleotide sequence ID" value="NC_012759.1"/>
</dbReference>
<dbReference type="SMR" id="C4ZYU1"/>
<dbReference type="GeneID" id="98389839"/>
<dbReference type="KEGG" id="ebw:BWG_2432"/>
<dbReference type="HOGENOM" id="CLU_164837_2_1_6"/>
<dbReference type="GO" id="GO:0005829">
    <property type="term" value="C:cytosol"/>
    <property type="evidence" value="ECO:0007669"/>
    <property type="project" value="TreeGrafter"/>
</dbReference>
<dbReference type="GO" id="GO:0048027">
    <property type="term" value="F:mRNA 5'-UTR binding"/>
    <property type="evidence" value="ECO:0007669"/>
    <property type="project" value="UniProtKB-UniRule"/>
</dbReference>
<dbReference type="GO" id="GO:0006402">
    <property type="term" value="P:mRNA catabolic process"/>
    <property type="evidence" value="ECO:0007669"/>
    <property type="project" value="InterPro"/>
</dbReference>
<dbReference type="GO" id="GO:0045947">
    <property type="term" value="P:negative regulation of translational initiation"/>
    <property type="evidence" value="ECO:0007669"/>
    <property type="project" value="UniProtKB-UniRule"/>
</dbReference>
<dbReference type="GO" id="GO:0045948">
    <property type="term" value="P:positive regulation of translational initiation"/>
    <property type="evidence" value="ECO:0007669"/>
    <property type="project" value="UniProtKB-UniRule"/>
</dbReference>
<dbReference type="GO" id="GO:0006109">
    <property type="term" value="P:regulation of carbohydrate metabolic process"/>
    <property type="evidence" value="ECO:0007669"/>
    <property type="project" value="UniProtKB-UniRule"/>
</dbReference>
<dbReference type="FunFam" id="2.60.40.4380:FF:000001">
    <property type="entry name" value="Translational regulator CsrA"/>
    <property type="match status" value="1"/>
</dbReference>
<dbReference type="Gene3D" id="2.60.40.4380">
    <property type="entry name" value="Translational regulator CsrA"/>
    <property type="match status" value="1"/>
</dbReference>
<dbReference type="HAMAP" id="MF_00167">
    <property type="entry name" value="CsrA"/>
    <property type="match status" value="1"/>
</dbReference>
<dbReference type="InterPro" id="IPR003751">
    <property type="entry name" value="CsrA"/>
</dbReference>
<dbReference type="InterPro" id="IPR036107">
    <property type="entry name" value="CsrA_sf"/>
</dbReference>
<dbReference type="NCBIfam" id="TIGR00202">
    <property type="entry name" value="csrA"/>
    <property type="match status" value="1"/>
</dbReference>
<dbReference type="NCBIfam" id="NF002469">
    <property type="entry name" value="PRK01712.1"/>
    <property type="match status" value="1"/>
</dbReference>
<dbReference type="PANTHER" id="PTHR34984">
    <property type="entry name" value="CARBON STORAGE REGULATOR"/>
    <property type="match status" value="1"/>
</dbReference>
<dbReference type="PANTHER" id="PTHR34984:SF1">
    <property type="entry name" value="CARBON STORAGE REGULATOR"/>
    <property type="match status" value="1"/>
</dbReference>
<dbReference type="Pfam" id="PF02599">
    <property type="entry name" value="CsrA"/>
    <property type="match status" value="1"/>
</dbReference>
<dbReference type="SUPFAM" id="SSF117130">
    <property type="entry name" value="CsrA-like"/>
    <property type="match status" value="1"/>
</dbReference>